<gene>
    <name evidence="2" type="primary">ddl</name>
    <name type="synonym">ddlB</name>
    <name type="ordered locus">BA_2610</name>
    <name type="ordered locus">GBAA_2610</name>
    <name type="ordered locus">BAS2435</name>
</gene>
<feature type="chain" id="PRO_0000177781" description="D-alanine--D-alanine ligase">
    <location>
        <begin position="1"/>
        <end position="304"/>
    </location>
</feature>
<feature type="domain" description="ATP-grasp" evidence="2">
    <location>
        <begin position="99"/>
        <end position="293"/>
    </location>
</feature>
<feature type="binding site" evidence="2">
    <location>
        <begin position="126"/>
        <end position="181"/>
    </location>
    <ligand>
        <name>ATP</name>
        <dbReference type="ChEBI" id="CHEBI:30616"/>
    </ligand>
</feature>
<feature type="binding site" evidence="2">
    <location>
        <position position="248"/>
    </location>
    <ligand>
        <name>Mg(2+)</name>
        <dbReference type="ChEBI" id="CHEBI:18420"/>
        <label>1</label>
    </ligand>
</feature>
<feature type="binding site" evidence="2">
    <location>
        <position position="260"/>
    </location>
    <ligand>
        <name>Mg(2+)</name>
        <dbReference type="ChEBI" id="CHEBI:18420"/>
        <label>1</label>
    </ligand>
</feature>
<feature type="binding site" evidence="2">
    <location>
        <position position="260"/>
    </location>
    <ligand>
        <name>Mg(2+)</name>
        <dbReference type="ChEBI" id="CHEBI:18420"/>
        <label>2</label>
    </ligand>
</feature>
<feature type="binding site" evidence="2">
    <location>
        <position position="262"/>
    </location>
    <ligand>
        <name>Mg(2+)</name>
        <dbReference type="ChEBI" id="CHEBI:18420"/>
        <label>2</label>
    </ligand>
</feature>
<feature type="strand" evidence="4">
    <location>
        <begin position="1"/>
        <end position="7"/>
    </location>
</feature>
<feature type="helix" evidence="4">
    <location>
        <begin position="11"/>
        <end position="27"/>
    </location>
</feature>
<feature type="turn" evidence="4">
    <location>
        <begin position="30"/>
        <end position="32"/>
    </location>
</feature>
<feature type="strand" evidence="4">
    <location>
        <begin position="33"/>
        <end position="39"/>
    </location>
</feature>
<feature type="helix" evidence="4">
    <location>
        <begin position="43"/>
        <end position="45"/>
    </location>
</feature>
<feature type="helix" evidence="4">
    <location>
        <begin position="46"/>
        <end position="49"/>
    </location>
</feature>
<feature type="turn" evidence="4">
    <location>
        <begin position="50"/>
        <end position="52"/>
    </location>
</feature>
<feature type="strand" evidence="4">
    <location>
        <begin position="54"/>
        <end position="58"/>
    </location>
</feature>
<feature type="helix" evidence="4">
    <location>
        <begin position="63"/>
        <end position="66"/>
    </location>
</feature>
<feature type="helix" evidence="4">
    <location>
        <begin position="69"/>
        <end position="77"/>
    </location>
</feature>
<feature type="strand" evidence="4">
    <location>
        <begin position="81"/>
        <end position="84"/>
    </location>
</feature>
<feature type="helix" evidence="4">
    <location>
        <begin position="86"/>
        <end position="93"/>
    </location>
</feature>
<feature type="helix" evidence="4">
    <location>
        <begin position="95"/>
        <end position="104"/>
    </location>
</feature>
<feature type="strand" evidence="4">
    <location>
        <begin position="112"/>
        <end position="119"/>
    </location>
</feature>
<feature type="helix" evidence="4">
    <location>
        <begin position="123"/>
        <end position="129"/>
    </location>
</feature>
<feature type="strand" evidence="4">
    <location>
        <begin position="131"/>
        <end position="137"/>
    </location>
</feature>
<feature type="strand" evidence="3">
    <location>
        <begin position="142"/>
        <end position="144"/>
    </location>
</feature>
<feature type="strand" evidence="4">
    <location>
        <begin position="147"/>
        <end position="149"/>
    </location>
</feature>
<feature type="helix" evidence="4">
    <location>
        <begin position="152"/>
        <end position="165"/>
    </location>
</feature>
<feature type="strand" evidence="4">
    <location>
        <begin position="167"/>
        <end position="173"/>
    </location>
</feature>
<feature type="strand" evidence="4">
    <location>
        <begin position="177"/>
        <end position="185"/>
    </location>
</feature>
<feature type="strand" evidence="4">
    <location>
        <begin position="193"/>
        <end position="202"/>
    </location>
</feature>
<feature type="strand" evidence="4">
    <location>
        <begin position="205"/>
        <end position="217"/>
    </location>
</feature>
<feature type="helix" evidence="4">
    <location>
        <begin position="222"/>
        <end position="238"/>
    </location>
</feature>
<feature type="strand" evidence="4">
    <location>
        <begin position="243"/>
        <end position="252"/>
    </location>
</feature>
<feature type="strand" evidence="4">
    <location>
        <begin position="255"/>
        <end position="264"/>
    </location>
</feature>
<feature type="helix" evidence="4">
    <location>
        <begin position="272"/>
        <end position="279"/>
    </location>
</feature>
<feature type="helix" evidence="4">
    <location>
        <begin position="284"/>
        <end position="302"/>
    </location>
</feature>
<evidence type="ECO:0000250" key="1"/>
<evidence type="ECO:0000255" key="2">
    <source>
        <dbReference type="HAMAP-Rule" id="MF_00047"/>
    </source>
</evidence>
<evidence type="ECO:0007829" key="3">
    <source>
        <dbReference type="PDB" id="3R23"/>
    </source>
</evidence>
<evidence type="ECO:0007829" key="4">
    <source>
        <dbReference type="PDB" id="3R5X"/>
    </source>
</evidence>
<organism>
    <name type="scientific">Bacillus anthracis</name>
    <dbReference type="NCBI Taxonomy" id="1392"/>
    <lineage>
        <taxon>Bacteria</taxon>
        <taxon>Bacillati</taxon>
        <taxon>Bacillota</taxon>
        <taxon>Bacilli</taxon>
        <taxon>Bacillales</taxon>
        <taxon>Bacillaceae</taxon>
        <taxon>Bacillus</taxon>
        <taxon>Bacillus cereus group</taxon>
    </lineage>
</organism>
<dbReference type="EC" id="6.3.2.4" evidence="2"/>
<dbReference type="EMBL" id="AE016879">
    <property type="protein sequence ID" value="AAP26458.1"/>
    <property type="molecule type" value="Genomic_DNA"/>
</dbReference>
<dbReference type="EMBL" id="AE017334">
    <property type="protein sequence ID" value="AAT31727.1"/>
    <property type="molecule type" value="Genomic_DNA"/>
</dbReference>
<dbReference type="EMBL" id="AE017225">
    <property type="protein sequence ID" value="AAT54746.1"/>
    <property type="molecule type" value="Genomic_DNA"/>
</dbReference>
<dbReference type="RefSeq" id="NP_844972.1">
    <property type="nucleotide sequence ID" value="NC_003997.3"/>
</dbReference>
<dbReference type="RefSeq" id="WP_003157623.1">
    <property type="nucleotide sequence ID" value="NZ_WXXI01000021.1"/>
</dbReference>
<dbReference type="RefSeq" id="YP_028695.1">
    <property type="nucleotide sequence ID" value="NC_005945.1"/>
</dbReference>
<dbReference type="PDB" id="3R23">
    <property type="method" value="X-ray"/>
    <property type="resolution" value="2.50 A"/>
    <property type="chains" value="A/B=1-304"/>
</dbReference>
<dbReference type="PDB" id="3R5X">
    <property type="method" value="X-ray"/>
    <property type="resolution" value="2.00 A"/>
    <property type="chains" value="A/B/C/D=1-304"/>
</dbReference>
<dbReference type="PDBsum" id="3R23"/>
<dbReference type="PDBsum" id="3R5X"/>
<dbReference type="SMR" id="Q81Q29"/>
<dbReference type="STRING" id="261594.GBAA_2610"/>
<dbReference type="DNASU" id="1086552"/>
<dbReference type="GeneID" id="45022466"/>
<dbReference type="KEGG" id="ban:BA_2610"/>
<dbReference type="KEGG" id="bar:GBAA_2610"/>
<dbReference type="KEGG" id="bat:BAS2435"/>
<dbReference type="PATRIC" id="fig|198094.11.peg.2589"/>
<dbReference type="eggNOG" id="COG1181">
    <property type="taxonomic scope" value="Bacteria"/>
</dbReference>
<dbReference type="HOGENOM" id="CLU_039268_1_1_9"/>
<dbReference type="OMA" id="NMHSKYF"/>
<dbReference type="OrthoDB" id="9813261at2"/>
<dbReference type="UniPathway" id="UPA00219"/>
<dbReference type="EvolutionaryTrace" id="Q81Q29"/>
<dbReference type="Proteomes" id="UP000000427">
    <property type="component" value="Chromosome"/>
</dbReference>
<dbReference type="Proteomes" id="UP000000594">
    <property type="component" value="Chromosome"/>
</dbReference>
<dbReference type="GO" id="GO:0005737">
    <property type="term" value="C:cytoplasm"/>
    <property type="evidence" value="ECO:0007669"/>
    <property type="project" value="UniProtKB-SubCell"/>
</dbReference>
<dbReference type="GO" id="GO:0005524">
    <property type="term" value="F:ATP binding"/>
    <property type="evidence" value="ECO:0007669"/>
    <property type="project" value="UniProtKB-KW"/>
</dbReference>
<dbReference type="GO" id="GO:0008716">
    <property type="term" value="F:D-alanine-D-alanine ligase activity"/>
    <property type="evidence" value="ECO:0007669"/>
    <property type="project" value="UniProtKB-UniRule"/>
</dbReference>
<dbReference type="GO" id="GO:0046872">
    <property type="term" value="F:metal ion binding"/>
    <property type="evidence" value="ECO:0007669"/>
    <property type="project" value="UniProtKB-KW"/>
</dbReference>
<dbReference type="GO" id="GO:0071555">
    <property type="term" value="P:cell wall organization"/>
    <property type="evidence" value="ECO:0007669"/>
    <property type="project" value="UniProtKB-KW"/>
</dbReference>
<dbReference type="GO" id="GO:0009252">
    <property type="term" value="P:peptidoglycan biosynthetic process"/>
    <property type="evidence" value="ECO:0007669"/>
    <property type="project" value="UniProtKB-UniRule"/>
</dbReference>
<dbReference type="GO" id="GO:0008360">
    <property type="term" value="P:regulation of cell shape"/>
    <property type="evidence" value="ECO:0007669"/>
    <property type="project" value="UniProtKB-KW"/>
</dbReference>
<dbReference type="FunFam" id="3.30.470.20:FF:000074">
    <property type="entry name" value="D-alanine--D-alanine ligase"/>
    <property type="match status" value="1"/>
</dbReference>
<dbReference type="FunFam" id="3.40.50.20:FF:000031">
    <property type="entry name" value="D-alanine--D-alanine ligase"/>
    <property type="match status" value="1"/>
</dbReference>
<dbReference type="Gene3D" id="3.40.50.20">
    <property type="match status" value="1"/>
</dbReference>
<dbReference type="Gene3D" id="3.30.1490.20">
    <property type="entry name" value="ATP-grasp fold, A domain"/>
    <property type="match status" value="1"/>
</dbReference>
<dbReference type="Gene3D" id="3.30.470.20">
    <property type="entry name" value="ATP-grasp fold, B domain"/>
    <property type="match status" value="1"/>
</dbReference>
<dbReference type="HAMAP" id="MF_00047">
    <property type="entry name" value="Dala_Dala_lig"/>
    <property type="match status" value="1"/>
</dbReference>
<dbReference type="InterPro" id="IPR011761">
    <property type="entry name" value="ATP-grasp"/>
</dbReference>
<dbReference type="InterPro" id="IPR013815">
    <property type="entry name" value="ATP_grasp_subdomain_1"/>
</dbReference>
<dbReference type="InterPro" id="IPR000291">
    <property type="entry name" value="D-Ala_lig_Van_CS"/>
</dbReference>
<dbReference type="InterPro" id="IPR005905">
    <property type="entry name" value="D_ala_D_ala"/>
</dbReference>
<dbReference type="InterPro" id="IPR011095">
    <property type="entry name" value="Dala_Dala_lig_C"/>
</dbReference>
<dbReference type="InterPro" id="IPR011127">
    <property type="entry name" value="Dala_Dala_lig_N"/>
</dbReference>
<dbReference type="InterPro" id="IPR016185">
    <property type="entry name" value="PreATP-grasp_dom_sf"/>
</dbReference>
<dbReference type="NCBIfam" id="TIGR01205">
    <property type="entry name" value="D_ala_D_alaTIGR"/>
    <property type="match status" value="1"/>
</dbReference>
<dbReference type="NCBIfam" id="NF002378">
    <property type="entry name" value="PRK01372.1"/>
    <property type="match status" value="1"/>
</dbReference>
<dbReference type="PANTHER" id="PTHR23132">
    <property type="entry name" value="D-ALANINE--D-ALANINE LIGASE"/>
    <property type="match status" value="1"/>
</dbReference>
<dbReference type="PANTHER" id="PTHR23132:SF23">
    <property type="entry name" value="D-ALANINE--D-ALANINE LIGASE B"/>
    <property type="match status" value="1"/>
</dbReference>
<dbReference type="Pfam" id="PF07478">
    <property type="entry name" value="Dala_Dala_lig_C"/>
    <property type="match status" value="1"/>
</dbReference>
<dbReference type="Pfam" id="PF01820">
    <property type="entry name" value="Dala_Dala_lig_N"/>
    <property type="match status" value="2"/>
</dbReference>
<dbReference type="PIRSF" id="PIRSF039102">
    <property type="entry name" value="Ddl/VanB"/>
    <property type="match status" value="1"/>
</dbReference>
<dbReference type="SMART" id="SM01209">
    <property type="entry name" value="GARS_A"/>
    <property type="match status" value="1"/>
</dbReference>
<dbReference type="SUPFAM" id="SSF56059">
    <property type="entry name" value="Glutathione synthetase ATP-binding domain-like"/>
    <property type="match status" value="1"/>
</dbReference>
<dbReference type="SUPFAM" id="SSF52440">
    <property type="entry name" value="PreATP-grasp domain"/>
    <property type="match status" value="1"/>
</dbReference>
<dbReference type="PROSITE" id="PS50975">
    <property type="entry name" value="ATP_GRASP"/>
    <property type="match status" value="1"/>
</dbReference>
<dbReference type="PROSITE" id="PS00843">
    <property type="entry name" value="DALA_DALA_LIGASE_1"/>
    <property type="match status" value="1"/>
</dbReference>
<dbReference type="PROSITE" id="PS00844">
    <property type="entry name" value="DALA_DALA_LIGASE_2"/>
    <property type="match status" value="1"/>
</dbReference>
<proteinExistence type="evidence at protein level"/>
<name>DDL_BACAN</name>
<sequence length="304" mass="33852">MRIGVIMGGVSSEKQVSIMTGNEMIANLDKNKYEIVPITLNEKMDLIEKAKDIDFALLALHGKYGEDGTVQGTLESLGIPYSGSNMLSSGICMDKNISKKILRYEGIETPDWIELTKMEDLNFDELDKLGFPLVVKPNSGGSSVGVKIVYDKDELISMLETVFEWDSEVVIEKYIKGEEITCSIFDGKQLPIISIRHAAEFFDYNAKYDDASTIEEVIELPAELKERVNKASLACYKALKCSVYARVDMMVKDGIPYVMEVNTLPGMTQASLLPKSADAAGIHYSKLLDMIIETSLRVRKEEGF</sequence>
<accession>Q81Q29</accession>
<accession>Q6HY93</accession>
<accession>Q6KY66</accession>
<keyword id="KW-0002">3D-structure</keyword>
<keyword id="KW-0067">ATP-binding</keyword>
<keyword id="KW-0133">Cell shape</keyword>
<keyword id="KW-0961">Cell wall biogenesis/degradation</keyword>
<keyword id="KW-0963">Cytoplasm</keyword>
<keyword id="KW-0436">Ligase</keyword>
<keyword id="KW-0460">Magnesium</keyword>
<keyword id="KW-0464">Manganese</keyword>
<keyword id="KW-0479">Metal-binding</keyword>
<keyword id="KW-0547">Nucleotide-binding</keyword>
<keyword id="KW-0573">Peptidoglycan synthesis</keyword>
<keyword id="KW-1185">Reference proteome</keyword>
<comment type="function">
    <text evidence="2">Cell wall formation.</text>
</comment>
<comment type="catalytic activity">
    <reaction evidence="2">
        <text>2 D-alanine + ATP = D-alanyl-D-alanine + ADP + phosphate + H(+)</text>
        <dbReference type="Rhea" id="RHEA:11224"/>
        <dbReference type="ChEBI" id="CHEBI:15378"/>
        <dbReference type="ChEBI" id="CHEBI:30616"/>
        <dbReference type="ChEBI" id="CHEBI:43474"/>
        <dbReference type="ChEBI" id="CHEBI:57416"/>
        <dbReference type="ChEBI" id="CHEBI:57822"/>
        <dbReference type="ChEBI" id="CHEBI:456216"/>
        <dbReference type="EC" id="6.3.2.4"/>
    </reaction>
</comment>
<comment type="cofactor">
    <cofactor evidence="1">
        <name>Mg(2+)</name>
        <dbReference type="ChEBI" id="CHEBI:18420"/>
    </cofactor>
    <cofactor evidence="1">
        <name>Mn(2+)</name>
        <dbReference type="ChEBI" id="CHEBI:29035"/>
    </cofactor>
    <text evidence="1">Binds 2 magnesium or manganese ions per subunit.</text>
</comment>
<comment type="pathway">
    <text evidence="2">Cell wall biogenesis; peptidoglycan biosynthesis.</text>
</comment>
<comment type="subcellular location">
    <subcellularLocation>
        <location evidence="2">Cytoplasm</location>
    </subcellularLocation>
</comment>
<comment type="similarity">
    <text evidence="2">Belongs to the D-alanine--D-alanine ligase family.</text>
</comment>
<protein>
    <recommendedName>
        <fullName evidence="2">D-alanine--D-alanine ligase</fullName>
        <ecNumber evidence="2">6.3.2.4</ecNumber>
    </recommendedName>
    <alternativeName>
        <fullName evidence="2">D-Ala-D-Ala ligase</fullName>
    </alternativeName>
    <alternativeName>
        <fullName evidence="2">D-alanylalanine synthetase</fullName>
    </alternativeName>
</protein>
<reference key="1">
    <citation type="journal article" date="2003" name="Nature">
        <title>The genome sequence of Bacillus anthracis Ames and comparison to closely related bacteria.</title>
        <authorList>
            <person name="Read T.D."/>
            <person name="Peterson S.N."/>
            <person name="Tourasse N.J."/>
            <person name="Baillie L.W."/>
            <person name="Paulsen I.T."/>
            <person name="Nelson K.E."/>
            <person name="Tettelin H."/>
            <person name="Fouts D.E."/>
            <person name="Eisen J.A."/>
            <person name="Gill S.R."/>
            <person name="Holtzapple E.K."/>
            <person name="Okstad O.A."/>
            <person name="Helgason E."/>
            <person name="Rilstone J."/>
            <person name="Wu M."/>
            <person name="Kolonay J.F."/>
            <person name="Beanan M.J."/>
            <person name="Dodson R.J."/>
            <person name="Brinkac L.M."/>
            <person name="Gwinn M.L."/>
            <person name="DeBoy R.T."/>
            <person name="Madpu R."/>
            <person name="Daugherty S.C."/>
            <person name="Durkin A.S."/>
            <person name="Haft D.H."/>
            <person name="Nelson W.C."/>
            <person name="Peterson J.D."/>
            <person name="Pop M."/>
            <person name="Khouri H.M."/>
            <person name="Radune D."/>
            <person name="Benton J.L."/>
            <person name="Mahamoud Y."/>
            <person name="Jiang L."/>
            <person name="Hance I.R."/>
            <person name="Weidman J.F."/>
            <person name="Berry K.J."/>
            <person name="Plaut R.D."/>
            <person name="Wolf A.M."/>
            <person name="Watkins K.L."/>
            <person name="Nierman W.C."/>
            <person name="Hazen A."/>
            <person name="Cline R.T."/>
            <person name="Redmond C."/>
            <person name="Thwaite J.E."/>
            <person name="White O."/>
            <person name="Salzberg S.L."/>
            <person name="Thomason B."/>
            <person name="Friedlander A.M."/>
            <person name="Koehler T.M."/>
            <person name="Hanna P.C."/>
            <person name="Kolstoe A.-B."/>
            <person name="Fraser C.M."/>
        </authorList>
    </citation>
    <scope>NUCLEOTIDE SEQUENCE [LARGE SCALE GENOMIC DNA]</scope>
    <source>
        <strain>Ames / isolate Porton</strain>
    </source>
</reference>
<reference key="2">
    <citation type="journal article" date="2009" name="J. Bacteriol.">
        <title>The complete genome sequence of Bacillus anthracis Ames 'Ancestor'.</title>
        <authorList>
            <person name="Ravel J."/>
            <person name="Jiang L."/>
            <person name="Stanley S.T."/>
            <person name="Wilson M.R."/>
            <person name="Decker R.S."/>
            <person name="Read T.D."/>
            <person name="Worsham P."/>
            <person name="Keim P.S."/>
            <person name="Salzberg S.L."/>
            <person name="Fraser-Liggett C.M."/>
            <person name="Rasko D.A."/>
        </authorList>
    </citation>
    <scope>NUCLEOTIDE SEQUENCE [LARGE SCALE GENOMIC DNA]</scope>
    <source>
        <strain>Ames ancestor</strain>
    </source>
</reference>
<reference key="3">
    <citation type="submission" date="2004-01" db="EMBL/GenBank/DDBJ databases">
        <title>Complete genome sequence of Bacillus anthracis Sterne.</title>
        <authorList>
            <person name="Brettin T.S."/>
            <person name="Bruce D."/>
            <person name="Challacombe J.F."/>
            <person name="Gilna P."/>
            <person name="Han C."/>
            <person name="Hill K."/>
            <person name="Hitchcock P."/>
            <person name="Jackson P."/>
            <person name="Keim P."/>
            <person name="Longmire J."/>
            <person name="Lucas S."/>
            <person name="Okinaka R."/>
            <person name="Richardson P."/>
            <person name="Rubin E."/>
            <person name="Tice H."/>
        </authorList>
    </citation>
    <scope>NUCLEOTIDE SEQUENCE [LARGE SCALE GENOMIC DNA]</scope>
    <source>
        <strain>Sterne</strain>
    </source>
</reference>